<comment type="function">
    <text evidence="2 3">Forms a channel through the mitochondrial outer membrane and also the plasma membrane (By similarity). The channel at the outer mitochondrial membrane allows diffusion of small hydrophilic molecules; in the plasma membrane it is involved in cell volume regulation and apoptosis (By similarity). It adopts an open conformation at low or zero membrane potential and a closed conformation at potentials above 30-40 mV (By similarity). The open state has a weak anion selectivity whereas the closed state is cation-selective (By similarity). In depolarized mitochondria, acts downstream of park to promote mitophagy or prevent apoptosis; polyubiquitination by park promotes mitophagy, while monoubiquitination by park decreases mitochondrial calcium influx which ultimately inhibits apoptosis (PubMed:32047033).</text>
</comment>
<comment type="subunit">
    <text evidence="1">Interacts with hexokinases.</text>
</comment>
<comment type="subcellular location">
    <subcellularLocation>
        <location>Mitochondrion outer membrane</location>
    </subcellularLocation>
</comment>
<comment type="developmental stage">
    <text evidence="5">Expressed throughout development, highest levels are in embryos and pupae.</text>
</comment>
<comment type="domain">
    <text>Consists mainly of membrane-spanning sided beta-sheets.</text>
</comment>
<comment type="PTM">
    <text evidence="3">Ubiquitinated (PubMed:32047033). Undergoes monoubiquitination and polyubiquitination by park; monoubiquitination at Lys-273 inhibits apoptosis, whereas polyubiquitination at Lys-11, Lys-19, Lys-52 and Lys-109 may promote mitophagy (PubMed:32047033).</text>
</comment>
<comment type="similarity">
    <text evidence="6">Belongs to the eukaryotic mitochondrial porin family.</text>
</comment>
<gene>
    <name type="primary">porin</name>
    <name type="synonym">POR-1</name>
    <name type="synonym">VDAC</name>
    <name type="ORF">CG6647</name>
</gene>
<keyword id="KW-0903">Direct protein sequencing</keyword>
<keyword id="KW-0406">Ion transport</keyword>
<keyword id="KW-1017">Isopeptide bond</keyword>
<keyword id="KW-0472">Membrane</keyword>
<keyword id="KW-0496">Mitochondrion</keyword>
<keyword id="KW-1000">Mitochondrion outer membrane</keyword>
<keyword id="KW-0626">Porin</keyword>
<keyword id="KW-1185">Reference proteome</keyword>
<keyword id="KW-0812">Transmembrane</keyword>
<keyword id="KW-1134">Transmembrane beta strand</keyword>
<keyword id="KW-0813">Transport</keyword>
<keyword id="KW-0832">Ubl conjugation</keyword>
<protein>
    <recommendedName>
        <fullName>Voltage-dependent anion-selective channel</fullName>
    </recommendedName>
    <alternativeName>
        <fullName>DmVDAC</fullName>
    </alternativeName>
    <alternativeName>
        <fullName>Porin</fullName>
    </alternativeName>
</protein>
<sequence length="282" mass="30550">MAPPSYSDLGKQARDIFSKGYNFGLWKLDLKTKTSSGIEFNTAGHSNQESGKVFGSLETKYKVKDYGLTLTEKWNTDNTLFTEVAVQDQLLEGLKLSLEGNFAPQSGNKNGKFKVAYGHENVKADSDVNIDLKGPLINASAVLGYQGWLAGYQTAFDTQQSKLTTNNFALGYTTKDFVLHTAVNDGQEFSGSIFQRTSDKLDVGVQLSWASGTSNTKFAIGAKYQLDDDASVRAKVNNASQVGLGYQQKLRDGVTLTLSTLVDGKNFNAGGHKIGVGLELEA</sequence>
<proteinExistence type="evidence at protein level"/>
<feature type="initiator methionine" description="Removed" evidence="4">
    <location>
        <position position="1"/>
    </location>
</feature>
<feature type="chain" id="PRO_0000050520" description="Voltage-dependent anion-selective channel">
    <location>
        <begin position="2"/>
        <end position="282"/>
    </location>
</feature>
<feature type="site" description="Involved in hexokinase binding" evidence="1">
    <location>
        <position position="72"/>
    </location>
</feature>
<feature type="cross-link" description="Glycyl lysine isopeptide (Lys-Gly) (interchain with G-Cter in ubiquitin)" evidence="3">
    <location>
        <position position="11"/>
    </location>
</feature>
<feature type="cross-link" description="Glycyl lysine isopeptide (Lys-Gly) (interchain with G-Cter in ubiquitin)" evidence="3">
    <location>
        <position position="19"/>
    </location>
</feature>
<feature type="cross-link" description="Glycyl lysine isopeptide (Lys-Gly) (interchain with G-Cter in ubiquitin)" evidence="3">
    <location>
        <position position="52"/>
    </location>
</feature>
<feature type="cross-link" description="Glycyl lysine isopeptide (Lys-Gly) (interchain with G-Cter in ubiquitin)" evidence="3">
    <location>
        <position position="109"/>
    </location>
</feature>
<feature type="cross-link" description="Glycyl lysine isopeptide (Lys-Gly) (interchain with G-Cter in ubiquitin)" evidence="3">
    <location>
        <position position="273"/>
    </location>
</feature>
<feature type="mutagenesis site" description="Poly-KR; increase in apoptosis when overexpressed in muscle cells, resulting in wing posture abnormalities; when associated with R-19, R-52 and R-109." evidence="3">
    <original>K</original>
    <variation>R</variation>
    <location>
        <position position="11"/>
    </location>
</feature>
<feature type="mutagenesis site" description="Poly-KR; increase in apoptosis when overexpressed in muscle cells, resulting in wing posture abnormalities; when associated with R-11, R-52 and R-109." evidence="3">
    <original>K</original>
    <variation>R</variation>
    <location>
        <position position="19"/>
    </location>
</feature>
<feature type="mutagenesis site" description="Poly-KR; increase in apoptosis when overexpressed in muscle cells, resulting in wing posture abnormalities; when associated with R-11, R-19 and R-109." evidence="3">
    <original>K</original>
    <variation>R</variation>
    <location>
        <position position="52"/>
    </location>
</feature>
<feature type="mutagenesis site" description="Poly-KR; increase in apoptosis when overexpressed in muscle cells, resulting in wing posture abnormalities; when associated with R-11, R-19 and R-52." evidence="3">
    <original>K</original>
    <variation>R</variation>
    <location>
        <position position="109"/>
    </location>
</feature>
<feature type="mutagenesis site" description="Significant increase in apoptosis when overexpressed in muscle cells, resulting in severe wing posture abnormalities and impaired climbing ability." evidence="3">
    <original>K</original>
    <variation>R</variation>
    <location>
        <position position="273"/>
    </location>
</feature>
<feature type="sequence conflict" description="In Ref. 2; CAA63143 and 3; CAA64988." evidence="6" ref="2 3">
    <original>S</original>
    <variation>R</variation>
    <location>
        <position position="231"/>
    </location>
</feature>
<feature type="sequence conflict" description="In Ref. 2; CAA63143 and 3; CAA64988." evidence="6" ref="2 3">
    <original>D</original>
    <variation>T</variation>
    <location>
        <position position="252"/>
    </location>
</feature>
<reference key="1">
    <citation type="journal article" date="1997" name="Biochim. Biophys. Acta">
        <title>Cloning and molecular characterization of a voltage-dependent anion-selective channel (VDAC) from Drosophila melanogaster.</title>
        <authorList>
            <person name="Ryerse J.S."/>
            <person name="Blachly-Dyson E."/>
            <person name="Forte M.A."/>
            <person name="Nagel B."/>
        </authorList>
    </citation>
    <scope>NUCLEOTIDE SEQUENCE [MRNA]</scope>
    <source>
        <strain>Canton-S</strain>
        <tissue>Embryo</tissue>
    </source>
</reference>
<reference key="2">
    <citation type="journal article" date="1996" name="FEBS Lett.">
        <title>Cloning and chromosomal localization of a cDNA encoding a mitochondrial porin from Drosophila melanogaster.</title>
        <authorList>
            <person name="Messina A."/>
            <person name="Neri M."/>
            <person name="Perosa F."/>
            <person name="Caggese C."/>
            <person name="Marino M."/>
            <person name="Caizzi R."/>
            <person name="De Pinto V."/>
        </authorList>
    </citation>
    <scope>NUCLEOTIDE SEQUENCE [MRNA]</scope>
    <scope>PROTEIN SEQUENCE OF 2-10</scope>
    <source>
        <strain>Oregon-R</strain>
        <tissue>Head</tissue>
    </source>
</reference>
<reference key="3">
    <citation type="journal article" date="1998" name="FEBS Lett.">
        <title>Sequence and expression pattern of the Drosophila melanogaster mitochondrial porin gene: evidence of a conserved protein domain between fly and mouse.</title>
        <authorList>
            <person name="Oliva M."/>
            <person name="Messina A."/>
            <person name="Ragone G."/>
            <person name="Caggese C."/>
            <person name="De Pinto V."/>
        </authorList>
    </citation>
    <scope>NUCLEOTIDE SEQUENCE [MRNA]</scope>
    <scope>DEVELOPMENTAL STAGE</scope>
    <source>
        <strain>Oregon-R</strain>
        <tissue>Larva</tissue>
    </source>
</reference>
<reference key="4">
    <citation type="journal article" date="1999" name="Mol. Gen. Genet.">
        <title>Identification of nuclear genes encoding mitochondrial proteins: isolation of a collection of D. melanogaster cDNAs homologous to sequences in the Human Gene Index database.</title>
        <authorList>
            <person name="Caggese C."/>
            <person name="Ragone G."/>
            <person name="Perrini B."/>
            <person name="Moschetti R."/>
            <person name="de Pinto V."/>
            <person name="Caizzi R."/>
            <person name="Barsanti P."/>
        </authorList>
    </citation>
    <scope>NUCLEOTIDE SEQUENCE [GENOMIC DNA]</scope>
    <source>
        <tissue>Ovary</tissue>
    </source>
</reference>
<reference key="5">
    <citation type="journal article" date="2000" name="Science">
        <title>The genome sequence of Drosophila melanogaster.</title>
        <authorList>
            <person name="Adams M.D."/>
            <person name="Celniker S.E."/>
            <person name="Holt R.A."/>
            <person name="Evans C.A."/>
            <person name="Gocayne J.D."/>
            <person name="Amanatides P.G."/>
            <person name="Scherer S.E."/>
            <person name="Li P.W."/>
            <person name="Hoskins R.A."/>
            <person name="Galle R.F."/>
            <person name="George R.A."/>
            <person name="Lewis S.E."/>
            <person name="Richards S."/>
            <person name="Ashburner M."/>
            <person name="Henderson S.N."/>
            <person name="Sutton G.G."/>
            <person name="Wortman J.R."/>
            <person name="Yandell M.D."/>
            <person name="Zhang Q."/>
            <person name="Chen L.X."/>
            <person name="Brandon R.C."/>
            <person name="Rogers Y.-H.C."/>
            <person name="Blazej R.G."/>
            <person name="Champe M."/>
            <person name="Pfeiffer B.D."/>
            <person name="Wan K.H."/>
            <person name="Doyle C."/>
            <person name="Baxter E.G."/>
            <person name="Helt G."/>
            <person name="Nelson C.R."/>
            <person name="Miklos G.L.G."/>
            <person name="Abril J.F."/>
            <person name="Agbayani A."/>
            <person name="An H.-J."/>
            <person name="Andrews-Pfannkoch C."/>
            <person name="Baldwin D."/>
            <person name="Ballew R.M."/>
            <person name="Basu A."/>
            <person name="Baxendale J."/>
            <person name="Bayraktaroglu L."/>
            <person name="Beasley E.M."/>
            <person name="Beeson K.Y."/>
            <person name="Benos P.V."/>
            <person name="Berman B.P."/>
            <person name="Bhandari D."/>
            <person name="Bolshakov S."/>
            <person name="Borkova D."/>
            <person name="Botchan M.R."/>
            <person name="Bouck J."/>
            <person name="Brokstein P."/>
            <person name="Brottier P."/>
            <person name="Burtis K.C."/>
            <person name="Busam D.A."/>
            <person name="Butler H."/>
            <person name="Cadieu E."/>
            <person name="Center A."/>
            <person name="Chandra I."/>
            <person name="Cherry J.M."/>
            <person name="Cawley S."/>
            <person name="Dahlke C."/>
            <person name="Davenport L.B."/>
            <person name="Davies P."/>
            <person name="de Pablos B."/>
            <person name="Delcher A."/>
            <person name="Deng Z."/>
            <person name="Mays A.D."/>
            <person name="Dew I."/>
            <person name="Dietz S.M."/>
            <person name="Dodson K."/>
            <person name="Doup L.E."/>
            <person name="Downes M."/>
            <person name="Dugan-Rocha S."/>
            <person name="Dunkov B.C."/>
            <person name="Dunn P."/>
            <person name="Durbin K.J."/>
            <person name="Evangelista C.C."/>
            <person name="Ferraz C."/>
            <person name="Ferriera S."/>
            <person name="Fleischmann W."/>
            <person name="Fosler C."/>
            <person name="Gabrielian A.E."/>
            <person name="Garg N.S."/>
            <person name="Gelbart W.M."/>
            <person name="Glasser K."/>
            <person name="Glodek A."/>
            <person name="Gong F."/>
            <person name="Gorrell J.H."/>
            <person name="Gu Z."/>
            <person name="Guan P."/>
            <person name="Harris M."/>
            <person name="Harris N.L."/>
            <person name="Harvey D.A."/>
            <person name="Heiman T.J."/>
            <person name="Hernandez J.R."/>
            <person name="Houck J."/>
            <person name="Hostin D."/>
            <person name="Houston K.A."/>
            <person name="Howland T.J."/>
            <person name="Wei M.-H."/>
            <person name="Ibegwam C."/>
            <person name="Jalali M."/>
            <person name="Kalush F."/>
            <person name="Karpen G.H."/>
            <person name="Ke Z."/>
            <person name="Kennison J.A."/>
            <person name="Ketchum K.A."/>
            <person name="Kimmel B.E."/>
            <person name="Kodira C.D."/>
            <person name="Kraft C.L."/>
            <person name="Kravitz S."/>
            <person name="Kulp D."/>
            <person name="Lai Z."/>
            <person name="Lasko P."/>
            <person name="Lei Y."/>
            <person name="Levitsky A.A."/>
            <person name="Li J.H."/>
            <person name="Li Z."/>
            <person name="Liang Y."/>
            <person name="Lin X."/>
            <person name="Liu X."/>
            <person name="Mattei B."/>
            <person name="McIntosh T.C."/>
            <person name="McLeod M.P."/>
            <person name="McPherson D."/>
            <person name="Merkulov G."/>
            <person name="Milshina N.V."/>
            <person name="Mobarry C."/>
            <person name="Morris J."/>
            <person name="Moshrefi A."/>
            <person name="Mount S.M."/>
            <person name="Moy M."/>
            <person name="Murphy B."/>
            <person name="Murphy L."/>
            <person name="Muzny D.M."/>
            <person name="Nelson D.L."/>
            <person name="Nelson D.R."/>
            <person name="Nelson K.A."/>
            <person name="Nixon K."/>
            <person name="Nusskern D.R."/>
            <person name="Pacleb J.M."/>
            <person name="Palazzolo M."/>
            <person name="Pittman G.S."/>
            <person name="Pan S."/>
            <person name="Pollard J."/>
            <person name="Puri V."/>
            <person name="Reese M.G."/>
            <person name="Reinert K."/>
            <person name="Remington K."/>
            <person name="Saunders R.D.C."/>
            <person name="Scheeler F."/>
            <person name="Shen H."/>
            <person name="Shue B.C."/>
            <person name="Siden-Kiamos I."/>
            <person name="Simpson M."/>
            <person name="Skupski M.P."/>
            <person name="Smith T.J."/>
            <person name="Spier E."/>
            <person name="Spradling A.C."/>
            <person name="Stapleton M."/>
            <person name="Strong R."/>
            <person name="Sun E."/>
            <person name="Svirskas R."/>
            <person name="Tector C."/>
            <person name="Turner R."/>
            <person name="Venter E."/>
            <person name="Wang A.H."/>
            <person name="Wang X."/>
            <person name="Wang Z.-Y."/>
            <person name="Wassarman D.A."/>
            <person name="Weinstock G.M."/>
            <person name="Weissenbach J."/>
            <person name="Williams S.M."/>
            <person name="Woodage T."/>
            <person name="Worley K.C."/>
            <person name="Wu D."/>
            <person name="Yang S."/>
            <person name="Yao Q.A."/>
            <person name="Ye J."/>
            <person name="Yeh R.-F."/>
            <person name="Zaveri J.S."/>
            <person name="Zhan M."/>
            <person name="Zhang G."/>
            <person name="Zhao Q."/>
            <person name="Zheng L."/>
            <person name="Zheng X.H."/>
            <person name="Zhong F.N."/>
            <person name="Zhong W."/>
            <person name="Zhou X."/>
            <person name="Zhu S.C."/>
            <person name="Zhu X."/>
            <person name="Smith H.O."/>
            <person name="Gibbs R.A."/>
            <person name="Myers E.W."/>
            <person name="Rubin G.M."/>
            <person name="Venter J.C."/>
        </authorList>
    </citation>
    <scope>NUCLEOTIDE SEQUENCE [LARGE SCALE GENOMIC DNA]</scope>
    <source>
        <strain>Berkeley</strain>
    </source>
</reference>
<reference key="6">
    <citation type="journal article" date="2002" name="Genome Biol.">
        <title>Annotation of the Drosophila melanogaster euchromatic genome: a systematic review.</title>
        <authorList>
            <person name="Misra S."/>
            <person name="Crosby M.A."/>
            <person name="Mungall C.J."/>
            <person name="Matthews B.B."/>
            <person name="Campbell K.S."/>
            <person name="Hradecky P."/>
            <person name="Huang Y."/>
            <person name="Kaminker J.S."/>
            <person name="Millburn G.H."/>
            <person name="Prochnik S.E."/>
            <person name="Smith C.D."/>
            <person name="Tupy J.L."/>
            <person name="Whitfield E.J."/>
            <person name="Bayraktaroglu L."/>
            <person name="Berman B.P."/>
            <person name="Bettencourt B.R."/>
            <person name="Celniker S.E."/>
            <person name="de Grey A.D.N.J."/>
            <person name="Drysdale R.A."/>
            <person name="Harris N.L."/>
            <person name="Richter J."/>
            <person name="Russo S."/>
            <person name="Schroeder A.J."/>
            <person name="Shu S.Q."/>
            <person name="Stapleton M."/>
            <person name="Yamada C."/>
            <person name="Ashburner M."/>
            <person name="Gelbart W.M."/>
            <person name="Rubin G.M."/>
            <person name="Lewis S.E."/>
        </authorList>
    </citation>
    <scope>GENOME REANNOTATION</scope>
    <source>
        <strain>Berkeley</strain>
    </source>
</reference>
<reference key="7">
    <citation type="journal article" date="2002" name="Genome Biol.">
        <title>A Drosophila full-length cDNA resource.</title>
        <authorList>
            <person name="Stapleton M."/>
            <person name="Carlson J.W."/>
            <person name="Brokstein P."/>
            <person name="Yu C."/>
            <person name="Champe M."/>
            <person name="George R.A."/>
            <person name="Guarin H."/>
            <person name="Kronmiller B."/>
            <person name="Pacleb J.M."/>
            <person name="Park S."/>
            <person name="Wan K.H."/>
            <person name="Rubin G.M."/>
            <person name="Celniker S.E."/>
        </authorList>
    </citation>
    <scope>NUCLEOTIDE SEQUENCE [LARGE SCALE MRNA]</scope>
    <source>
        <strain>Berkeley</strain>
        <tissue>Head</tissue>
    </source>
</reference>
<reference key="8">
    <citation type="submission" date="2006-01" db="EMBL/GenBank/DDBJ databases">
        <authorList>
            <person name="Stapleton M."/>
            <person name="Carlson J.W."/>
            <person name="Chavez C."/>
            <person name="Frise E."/>
            <person name="George R.A."/>
            <person name="Pacleb J.M."/>
            <person name="Park S."/>
            <person name="Wan K.H."/>
            <person name="Yu C."/>
            <person name="Celniker S.E."/>
        </authorList>
    </citation>
    <scope>NUCLEOTIDE SEQUENCE [LARGE SCALE MRNA]</scope>
    <source>
        <strain>Berkeley</strain>
    </source>
</reference>
<reference key="9">
    <citation type="journal article" date="2020" name="Proc. Natl. Acad. Sci. U.S.A.">
        <title>Decision between mitophagy and apoptosis by Parkin via VDAC1 ubiquitination.</title>
        <authorList>
            <person name="Ham S.J."/>
            <person name="Lee D."/>
            <person name="Yoo H."/>
            <person name="Jun K."/>
            <person name="Shin H."/>
            <person name="Chung J."/>
        </authorList>
    </citation>
    <scope>FUNCTION</scope>
    <scope>UBIQUITINATION AT LYS-11; LYS-19; LYS-52; LYS-109 AND LYS-273</scope>
    <scope>MUTAGENESIS OF LYS-11; LYS-19; LYS-52; LYS-109 AND LYS-273</scope>
</reference>
<organism>
    <name type="scientific">Drosophila melanogaster</name>
    <name type="common">Fruit fly</name>
    <dbReference type="NCBI Taxonomy" id="7227"/>
    <lineage>
        <taxon>Eukaryota</taxon>
        <taxon>Metazoa</taxon>
        <taxon>Ecdysozoa</taxon>
        <taxon>Arthropoda</taxon>
        <taxon>Hexapoda</taxon>
        <taxon>Insecta</taxon>
        <taxon>Pterygota</taxon>
        <taxon>Neoptera</taxon>
        <taxon>Endopterygota</taxon>
        <taxon>Diptera</taxon>
        <taxon>Brachycera</taxon>
        <taxon>Muscomorpha</taxon>
        <taxon>Ephydroidea</taxon>
        <taxon>Drosophilidae</taxon>
        <taxon>Drosophila</taxon>
        <taxon>Sophophora</taxon>
    </lineage>
</organism>
<dbReference type="EMBL" id="U70314">
    <property type="protein sequence ID" value="AAC02635.1"/>
    <property type="molecule type" value="mRNA"/>
</dbReference>
<dbReference type="EMBL" id="X92408">
    <property type="protein sequence ID" value="CAA63143.1"/>
    <property type="molecule type" value="mRNA"/>
</dbReference>
<dbReference type="EMBL" id="X95692">
    <property type="protein sequence ID" value="CAA64988.1"/>
    <property type="molecule type" value="mRNA"/>
</dbReference>
<dbReference type="EMBL" id="AJ000880">
    <property type="protein sequence ID" value="CAA04370.1"/>
    <property type="molecule type" value="Genomic_DNA"/>
</dbReference>
<dbReference type="EMBL" id="AE014134">
    <property type="protein sequence ID" value="AAF53022.1"/>
    <property type="molecule type" value="Genomic_DNA"/>
</dbReference>
<dbReference type="EMBL" id="AE014134">
    <property type="protein sequence ID" value="AAN10766.1"/>
    <property type="molecule type" value="Genomic_DNA"/>
</dbReference>
<dbReference type="EMBL" id="AE014134">
    <property type="protein sequence ID" value="ABC65894.1"/>
    <property type="molecule type" value="Genomic_DNA"/>
</dbReference>
<dbReference type="EMBL" id="AY070509">
    <property type="protein sequence ID" value="AAL47980.1"/>
    <property type="molecule type" value="mRNA"/>
</dbReference>
<dbReference type="EMBL" id="BT024247">
    <property type="protein sequence ID" value="ABC86309.1"/>
    <property type="molecule type" value="mRNA"/>
</dbReference>
<dbReference type="RefSeq" id="NP_001033899.1">
    <property type="nucleotide sequence ID" value="NM_001038810.2"/>
</dbReference>
<dbReference type="RefSeq" id="NP_001245961.1">
    <property type="nucleotide sequence ID" value="NM_001259032.1"/>
</dbReference>
<dbReference type="RefSeq" id="NP_001260365.1">
    <property type="nucleotide sequence ID" value="NM_001273436.1"/>
</dbReference>
<dbReference type="RefSeq" id="NP_476813.1">
    <property type="nucleotide sequence ID" value="NM_057465.4"/>
</dbReference>
<dbReference type="RefSeq" id="NP_599110.1">
    <property type="nucleotide sequence ID" value="NM_134283.2"/>
</dbReference>
<dbReference type="SMR" id="Q94920"/>
<dbReference type="BioGRID" id="60572">
    <property type="interactions" value="83"/>
</dbReference>
<dbReference type="DIP" id="DIP-17501N"/>
<dbReference type="FunCoup" id="Q94920">
    <property type="interactions" value="1862"/>
</dbReference>
<dbReference type="IntAct" id="Q94920">
    <property type="interactions" value="112"/>
</dbReference>
<dbReference type="MINT" id="Q94920"/>
<dbReference type="STRING" id="7227.FBpp0100039"/>
<dbReference type="TCDB" id="1.B.8.1.6">
    <property type="family name" value="the mitochondrial and plastid porin (mpp) family"/>
</dbReference>
<dbReference type="iPTMnet" id="Q94920"/>
<dbReference type="PaxDb" id="7227-FBpp0079772"/>
<dbReference type="DNASU" id="34500"/>
<dbReference type="EnsemblMetazoa" id="FBtr0080182">
    <property type="protein sequence ID" value="FBpp0079771"/>
    <property type="gene ID" value="FBgn0004363"/>
</dbReference>
<dbReference type="EnsemblMetazoa" id="FBtr0080183">
    <property type="protein sequence ID" value="FBpp0079772"/>
    <property type="gene ID" value="FBgn0004363"/>
</dbReference>
<dbReference type="EnsemblMetazoa" id="FBtr0100584">
    <property type="protein sequence ID" value="FBpp0100039"/>
    <property type="gene ID" value="FBgn0004363"/>
</dbReference>
<dbReference type="EnsemblMetazoa" id="FBtr0305260">
    <property type="protein sequence ID" value="FBpp0293784"/>
    <property type="gene ID" value="FBgn0004363"/>
</dbReference>
<dbReference type="EnsemblMetazoa" id="FBtr0332029">
    <property type="protein sequence ID" value="FBpp0304343"/>
    <property type="gene ID" value="FBgn0004363"/>
</dbReference>
<dbReference type="GeneID" id="34500"/>
<dbReference type="KEGG" id="dme:Dmel_CG6647"/>
<dbReference type="AGR" id="FB:FBgn0004363"/>
<dbReference type="CTD" id="34500"/>
<dbReference type="FlyBase" id="FBgn0004363">
    <property type="gene designation" value="porin"/>
</dbReference>
<dbReference type="VEuPathDB" id="VectorBase:FBgn0004363"/>
<dbReference type="eggNOG" id="KOG3126">
    <property type="taxonomic scope" value="Eukaryota"/>
</dbReference>
<dbReference type="GeneTree" id="ENSGT00950000182869"/>
<dbReference type="HOGENOM" id="CLU_044399_2_0_1"/>
<dbReference type="InParanoid" id="Q94920"/>
<dbReference type="OMA" id="MAPPCYA"/>
<dbReference type="OrthoDB" id="7827681at2759"/>
<dbReference type="PhylomeDB" id="Q94920"/>
<dbReference type="Reactome" id="R-DME-5205685">
    <property type="pathway name" value="PINK1-PRKN Mediated Mitophagy"/>
</dbReference>
<dbReference type="Reactome" id="R-DME-5689880">
    <property type="pathway name" value="Ub-specific processing proteases"/>
</dbReference>
<dbReference type="Reactome" id="R-DME-70268">
    <property type="pathway name" value="Pyruvate metabolism"/>
</dbReference>
<dbReference type="SignaLink" id="Q94920"/>
<dbReference type="BioGRID-ORCS" id="34500">
    <property type="hits" value="1 hit in 3 CRISPR screens"/>
</dbReference>
<dbReference type="ChiTaRS" id="porin">
    <property type="organism name" value="fly"/>
</dbReference>
<dbReference type="GenomeRNAi" id="34500"/>
<dbReference type="PRO" id="PR:Q94920"/>
<dbReference type="Proteomes" id="UP000000803">
    <property type="component" value="Chromosome 2L"/>
</dbReference>
<dbReference type="Bgee" id="FBgn0004363">
    <property type="expression patterns" value="Expressed in transmedullary neuron Tm5c (Drosophila) in brain and 317 other cell types or tissues"/>
</dbReference>
<dbReference type="ExpressionAtlas" id="Q94920">
    <property type="expression patterns" value="baseline and differential"/>
</dbReference>
<dbReference type="GO" id="GO:0005741">
    <property type="term" value="C:mitochondrial outer membrane"/>
    <property type="evidence" value="ECO:0000314"/>
    <property type="project" value="FlyBase"/>
</dbReference>
<dbReference type="GO" id="GO:0005739">
    <property type="term" value="C:mitochondrion"/>
    <property type="evidence" value="ECO:0000314"/>
    <property type="project" value="FlyBase"/>
</dbReference>
<dbReference type="GO" id="GO:0016006">
    <property type="term" value="C:Nebenkern"/>
    <property type="evidence" value="ECO:0000314"/>
    <property type="project" value="FlyBase"/>
</dbReference>
<dbReference type="GO" id="GO:0046930">
    <property type="term" value="C:pore complex"/>
    <property type="evidence" value="ECO:0007669"/>
    <property type="project" value="UniProtKB-KW"/>
</dbReference>
<dbReference type="GO" id="GO:0015288">
    <property type="term" value="F:porin activity"/>
    <property type="evidence" value="ECO:0007669"/>
    <property type="project" value="UniProtKB-KW"/>
</dbReference>
<dbReference type="GO" id="GO:0008308">
    <property type="term" value="F:voltage-gated monoatomic anion channel activity"/>
    <property type="evidence" value="ECO:0000314"/>
    <property type="project" value="FlyBase"/>
</dbReference>
<dbReference type="GO" id="GO:1990542">
    <property type="term" value="P:mitochondrial transmembrane transport"/>
    <property type="evidence" value="ECO:0000314"/>
    <property type="project" value="FlyBase"/>
</dbReference>
<dbReference type="GO" id="GO:0007005">
    <property type="term" value="P:mitochondrion organization"/>
    <property type="evidence" value="ECO:0000315"/>
    <property type="project" value="FlyBase"/>
</dbReference>
<dbReference type="GO" id="GO:0006811">
    <property type="term" value="P:monoatomic ion transport"/>
    <property type="evidence" value="ECO:0000314"/>
    <property type="project" value="FlyBase"/>
</dbReference>
<dbReference type="GO" id="GO:0043066">
    <property type="term" value="P:negative regulation of apoptotic process"/>
    <property type="evidence" value="ECO:0000315"/>
    <property type="project" value="UniProtKB"/>
</dbReference>
<dbReference type="GO" id="GO:0110099">
    <property type="term" value="P:negative regulation of calcium import into the mitochondrion"/>
    <property type="evidence" value="ECO:0000315"/>
    <property type="project" value="UniProtKB"/>
</dbReference>
<dbReference type="GO" id="GO:0007602">
    <property type="term" value="P:phototransduction"/>
    <property type="evidence" value="ECO:0000315"/>
    <property type="project" value="FlyBase"/>
</dbReference>
<dbReference type="GO" id="GO:0007291">
    <property type="term" value="P:sperm individualization"/>
    <property type="evidence" value="ECO:0000315"/>
    <property type="project" value="FlyBase"/>
</dbReference>
<dbReference type="GO" id="GO:0030382">
    <property type="term" value="P:sperm mitochondrion organization"/>
    <property type="evidence" value="ECO:0000315"/>
    <property type="project" value="FlyBase"/>
</dbReference>
<dbReference type="CDD" id="cd07306">
    <property type="entry name" value="Porin3_VDAC"/>
    <property type="match status" value="1"/>
</dbReference>
<dbReference type="FunFam" id="2.40.160.10:FF:000001">
    <property type="entry name" value="Voltage-dependent anion-selective channel protein 2"/>
    <property type="match status" value="1"/>
</dbReference>
<dbReference type="Gene3D" id="2.40.160.10">
    <property type="entry name" value="Porin"/>
    <property type="match status" value="1"/>
</dbReference>
<dbReference type="InterPro" id="IPR023614">
    <property type="entry name" value="Porin_dom_sf"/>
</dbReference>
<dbReference type="InterPro" id="IPR001925">
    <property type="entry name" value="Porin_Euk"/>
</dbReference>
<dbReference type="InterPro" id="IPR027246">
    <property type="entry name" value="Porin_Euk/Tom40"/>
</dbReference>
<dbReference type="PANTHER" id="PTHR11743:SF70">
    <property type="entry name" value="GH26960P-RELATED"/>
    <property type="match status" value="1"/>
</dbReference>
<dbReference type="PANTHER" id="PTHR11743">
    <property type="entry name" value="VOLTAGE-DEPENDENT ANION-SELECTIVE CHANNEL"/>
    <property type="match status" value="1"/>
</dbReference>
<dbReference type="Pfam" id="PF01459">
    <property type="entry name" value="Porin_3"/>
    <property type="match status" value="1"/>
</dbReference>
<dbReference type="PRINTS" id="PR00185">
    <property type="entry name" value="EUKARYTPORIN"/>
</dbReference>
<dbReference type="PROSITE" id="PS00558">
    <property type="entry name" value="EUKARYOTIC_PORIN"/>
    <property type="match status" value="1"/>
</dbReference>
<evidence type="ECO:0000250" key="1"/>
<evidence type="ECO:0000250" key="2">
    <source>
        <dbReference type="UniProtKB" id="P21796"/>
    </source>
</evidence>
<evidence type="ECO:0000269" key="3">
    <source>
    </source>
</evidence>
<evidence type="ECO:0000269" key="4">
    <source>
    </source>
</evidence>
<evidence type="ECO:0000269" key="5">
    <source>
    </source>
</evidence>
<evidence type="ECO:0000305" key="6"/>
<accession>Q94920</accession>
<accession>Q29QZ3</accession>
<accession>Q94997</accession>
<accession>Q9VKP1</accession>
<name>VDAC_DROME</name>